<organism>
    <name type="scientific">Pseudomonas aeruginosa (strain ATCC 15692 / DSM 22644 / CIP 104116 / JCM 14847 / LMG 12228 / 1C / PRS 101 / PAO1)</name>
    <dbReference type="NCBI Taxonomy" id="208964"/>
    <lineage>
        <taxon>Bacteria</taxon>
        <taxon>Pseudomonadati</taxon>
        <taxon>Pseudomonadota</taxon>
        <taxon>Gammaproteobacteria</taxon>
        <taxon>Pseudomonadales</taxon>
        <taxon>Pseudomonadaceae</taxon>
        <taxon>Pseudomonas</taxon>
    </lineage>
</organism>
<keyword id="KW-0002">3D-structure</keyword>
<keyword id="KW-0998">Cell outer membrane</keyword>
<keyword id="KW-1015">Disulfide bond</keyword>
<keyword id="KW-0449">Lipoprotein</keyword>
<keyword id="KW-0472">Membrane</keyword>
<keyword id="KW-0564">Palmitate</keyword>
<keyword id="KW-1185">Reference proteome</keyword>
<keyword id="KW-0732">Signal</keyword>
<dbReference type="EMBL" id="AE004091">
    <property type="protein sequence ID" value="AAG04256.1"/>
    <property type="molecule type" value="Genomic_DNA"/>
</dbReference>
<dbReference type="PIR" id="H83537">
    <property type="entry name" value="H83537"/>
</dbReference>
<dbReference type="RefSeq" id="NP_249558.1">
    <property type="nucleotide sequence ID" value="NC_002516.2"/>
</dbReference>
<dbReference type="RefSeq" id="WP_003085889.1">
    <property type="nucleotide sequence ID" value="NZ_QZGE01000007.1"/>
</dbReference>
<dbReference type="PDB" id="3F6Z">
    <property type="method" value="X-ray"/>
    <property type="resolution" value="2.50 A"/>
    <property type="chains" value="B/D=29-127"/>
</dbReference>
<dbReference type="PDBsum" id="3F6Z"/>
<dbReference type="SMR" id="Q9I574"/>
<dbReference type="FunCoup" id="Q9I574">
    <property type="interactions" value="63"/>
</dbReference>
<dbReference type="STRING" id="208964.PA0867"/>
<dbReference type="PaxDb" id="208964-PA0867"/>
<dbReference type="DNASU" id="882238"/>
<dbReference type="GeneID" id="882238"/>
<dbReference type="KEGG" id="pae:PA0867"/>
<dbReference type="PATRIC" id="fig|208964.12.peg.901"/>
<dbReference type="PseudoCAP" id="PA0867"/>
<dbReference type="HOGENOM" id="CLU_151151_0_0_6"/>
<dbReference type="InParanoid" id="Q9I574"/>
<dbReference type="OrthoDB" id="26727at2"/>
<dbReference type="PhylomeDB" id="Q9I574"/>
<dbReference type="BioCyc" id="PAER208964:G1FZ6-882-MONOMER"/>
<dbReference type="EvolutionaryTrace" id="Q9I574"/>
<dbReference type="Proteomes" id="UP000002438">
    <property type="component" value="Chromosome"/>
</dbReference>
<dbReference type="GO" id="GO:0009279">
    <property type="term" value="C:cell outer membrane"/>
    <property type="evidence" value="ECO:0007669"/>
    <property type="project" value="UniProtKB-SubCell"/>
</dbReference>
<dbReference type="Gene3D" id="2.40.128.200">
    <property type="match status" value="1"/>
</dbReference>
<dbReference type="InterPro" id="IPR018660">
    <property type="entry name" value="MliC"/>
</dbReference>
<dbReference type="InterPro" id="IPR036328">
    <property type="entry name" value="MliC_sf"/>
</dbReference>
<dbReference type="NCBIfam" id="NF010364">
    <property type="entry name" value="PRK13792.1"/>
    <property type="match status" value="1"/>
</dbReference>
<dbReference type="Pfam" id="PF09864">
    <property type="entry name" value="MliC"/>
    <property type="match status" value="1"/>
</dbReference>
<dbReference type="SUPFAM" id="SSF141488">
    <property type="entry name" value="YdhA-like"/>
    <property type="match status" value="1"/>
</dbReference>
<dbReference type="PROSITE" id="PS51257">
    <property type="entry name" value="PROKAR_LIPOPROTEIN"/>
    <property type="match status" value="1"/>
</dbReference>
<evidence type="ECO:0000250" key="1">
    <source>
        <dbReference type="UniProtKB" id="P28224"/>
    </source>
</evidence>
<evidence type="ECO:0000255" key="2">
    <source>
        <dbReference type="PROSITE-ProRule" id="PRU00303"/>
    </source>
</evidence>
<evidence type="ECO:0000269" key="3">
    <source>
    </source>
</evidence>
<evidence type="ECO:0000303" key="4">
    <source>
    </source>
</evidence>
<evidence type="ECO:0000305" key="5"/>
<evidence type="ECO:0000305" key="6">
    <source>
    </source>
</evidence>
<evidence type="ECO:0007829" key="7">
    <source>
        <dbReference type="PDB" id="3F6Z"/>
    </source>
</evidence>
<gene>
    <name evidence="4" type="primary">mliC</name>
    <name type="ordered locus">PA0867</name>
</gene>
<sequence>MKKALWLLLAAVPVVLVACGGSDDDKQTAQVDYLALPGDAKLDTRSVDYKCENGRKFTVQYLNKGDNSLAVVPVSDNSTLVFSNVISASGAKYAAGQYIWWTKGEEATLYGDWKGGEPTDGVACKER</sequence>
<proteinExistence type="evidence at protein level"/>
<protein>
    <recommendedName>
        <fullName evidence="4">Membrane-bound lysozyme inhibitor of C-type lysozyme</fullName>
    </recommendedName>
</protein>
<name>MLIC_PSEAE</name>
<reference key="1">
    <citation type="journal article" date="2000" name="Nature">
        <title>Complete genome sequence of Pseudomonas aeruginosa PAO1, an opportunistic pathogen.</title>
        <authorList>
            <person name="Stover C.K."/>
            <person name="Pham X.-Q.T."/>
            <person name="Erwin A.L."/>
            <person name="Mizoguchi S.D."/>
            <person name="Warrener P."/>
            <person name="Hickey M.J."/>
            <person name="Brinkman F.S.L."/>
            <person name="Hufnagle W.O."/>
            <person name="Kowalik D.J."/>
            <person name="Lagrou M."/>
            <person name="Garber R.L."/>
            <person name="Goltry L."/>
            <person name="Tolentino E."/>
            <person name="Westbrock-Wadman S."/>
            <person name="Yuan Y."/>
            <person name="Brody L.L."/>
            <person name="Coulter S.N."/>
            <person name="Folger K.R."/>
            <person name="Kas A."/>
            <person name="Larbig K."/>
            <person name="Lim R.M."/>
            <person name="Smith K.A."/>
            <person name="Spencer D.H."/>
            <person name="Wong G.K.-S."/>
            <person name="Wu Z."/>
            <person name="Paulsen I.T."/>
            <person name="Reizer J."/>
            <person name="Saier M.H. Jr."/>
            <person name="Hancock R.E.W."/>
            <person name="Lory S."/>
            <person name="Olson M.V."/>
        </authorList>
    </citation>
    <scope>NUCLEOTIDE SEQUENCE [LARGE SCALE GENOMIC DNA]</scope>
    <source>
        <strain>ATCC 15692 / DSM 22644 / CIP 104116 / JCM 14847 / LMG 12228 / 1C / PRS 101 / PAO1</strain>
    </source>
</reference>
<reference key="2">
    <citation type="journal article" date="2009" name="Biochem. Biophys. Res. Commun.">
        <title>Structural basis for the recognition of lysozyme by MliC, a periplasmic lysozyme inhibitor in Gram-negative bacteria.</title>
        <authorList>
            <person name="Yum S."/>
            <person name="Kim M.J."/>
            <person name="Xu Y."/>
            <person name="Jin X.L."/>
            <person name="Yoo H.Y."/>
            <person name="Park J.-W."/>
            <person name="Gong J.H."/>
            <person name="Choe K.-M."/>
            <person name="Lee B.L."/>
            <person name="Ha N.-C."/>
        </authorList>
    </citation>
    <scope>X-RAY CRYSTALLOGRAPHY (2.5 ANGSTROMS) OF 31-127 IN COMPLEX WITH CHICKEN LYSOZYME</scope>
    <scope>FUNCTION</scope>
    <scope>SUBUNIT</scope>
    <scope>MUTAGENESIS OF SER-89 AND LYS-103</scope>
    <scope>DISULFIDE BOND</scope>
</reference>
<comment type="function">
    <text evidence="3">Specifically inhibits C-type lysozymes.</text>
</comment>
<comment type="subunit">
    <text evidence="6">Homodimer.</text>
</comment>
<comment type="subcellular location">
    <subcellularLocation>
        <location evidence="1">Cell outer membrane</location>
        <topology evidence="2">Lipid-anchor</topology>
    </subcellularLocation>
    <text evidence="1">Anchored to the periplasmic side.</text>
</comment>
<comment type="similarity">
    <text evidence="5">Belongs to the MliC family. Type 2 subfamily.</text>
</comment>
<feature type="signal peptide" evidence="2">
    <location>
        <begin position="1"/>
        <end position="18"/>
    </location>
</feature>
<feature type="chain" id="PRO_0000378110" description="Membrane-bound lysozyme inhibitor of C-type lysozyme">
    <location>
        <begin position="19"/>
        <end position="127"/>
    </location>
</feature>
<feature type="site" description="Directly involved in lysozyme active site inhibition" evidence="6">
    <location>
        <position position="89"/>
    </location>
</feature>
<feature type="site" description="Directly involved in lysozyme active site inhibition" evidence="6">
    <location>
        <position position="103"/>
    </location>
</feature>
<feature type="lipid moiety-binding region" description="N-palmitoyl cysteine" evidence="2">
    <location>
        <position position="19"/>
    </location>
</feature>
<feature type="lipid moiety-binding region" description="S-diacylglycerol cysteine" evidence="2">
    <location>
        <position position="19"/>
    </location>
</feature>
<feature type="disulfide bond" evidence="3">
    <location>
        <begin position="51"/>
        <end position="124"/>
    </location>
</feature>
<feature type="mutagenesis site" description="Significantly reduced inhibitory activity." evidence="3">
    <original>S</original>
    <variation>A</variation>
    <location>
        <position position="89"/>
    </location>
</feature>
<feature type="mutagenesis site" description="Significantly reduced inhibitory activity." evidence="3">
    <original>K</original>
    <variation>A</variation>
    <location>
        <position position="103"/>
    </location>
</feature>
<feature type="strand" evidence="7">
    <location>
        <begin position="32"/>
        <end position="40"/>
    </location>
</feature>
<feature type="strand" evidence="7">
    <location>
        <begin position="42"/>
        <end position="51"/>
    </location>
</feature>
<feature type="strand" evidence="7">
    <location>
        <begin position="56"/>
        <end position="64"/>
    </location>
</feature>
<feature type="strand" evidence="7">
    <location>
        <begin position="67"/>
        <end position="75"/>
    </location>
</feature>
<feature type="strand" evidence="7">
    <location>
        <begin position="78"/>
        <end position="85"/>
    </location>
</feature>
<feature type="strand" evidence="7">
    <location>
        <begin position="88"/>
        <end position="96"/>
    </location>
</feature>
<feature type="strand" evidence="7">
    <location>
        <begin position="98"/>
        <end position="103"/>
    </location>
</feature>
<feature type="strand" evidence="7">
    <location>
        <begin position="106"/>
        <end position="110"/>
    </location>
</feature>
<feature type="strand" evidence="7">
    <location>
        <begin position="122"/>
        <end position="126"/>
    </location>
</feature>
<accession>Q9I574</accession>